<reference key="1">
    <citation type="journal article" date="2003" name="Nat. Genet.">
        <title>Comparative analysis of the genome sequences of Bordetella pertussis, Bordetella parapertussis and Bordetella bronchiseptica.</title>
        <authorList>
            <person name="Parkhill J."/>
            <person name="Sebaihia M."/>
            <person name="Preston A."/>
            <person name="Murphy L.D."/>
            <person name="Thomson N.R."/>
            <person name="Harris D.E."/>
            <person name="Holden M.T.G."/>
            <person name="Churcher C.M."/>
            <person name="Bentley S.D."/>
            <person name="Mungall K.L."/>
            <person name="Cerdeno-Tarraga A.-M."/>
            <person name="Temple L."/>
            <person name="James K.D."/>
            <person name="Harris B."/>
            <person name="Quail M.A."/>
            <person name="Achtman M."/>
            <person name="Atkin R."/>
            <person name="Baker S."/>
            <person name="Basham D."/>
            <person name="Bason N."/>
            <person name="Cherevach I."/>
            <person name="Chillingworth T."/>
            <person name="Collins M."/>
            <person name="Cronin A."/>
            <person name="Davis P."/>
            <person name="Doggett J."/>
            <person name="Feltwell T."/>
            <person name="Goble A."/>
            <person name="Hamlin N."/>
            <person name="Hauser H."/>
            <person name="Holroyd S."/>
            <person name="Jagels K."/>
            <person name="Leather S."/>
            <person name="Moule S."/>
            <person name="Norberczak H."/>
            <person name="O'Neil S."/>
            <person name="Ormond D."/>
            <person name="Price C."/>
            <person name="Rabbinowitsch E."/>
            <person name="Rutter S."/>
            <person name="Sanders M."/>
            <person name="Saunders D."/>
            <person name="Seeger K."/>
            <person name="Sharp S."/>
            <person name="Simmonds M."/>
            <person name="Skelton J."/>
            <person name="Squares R."/>
            <person name="Squares S."/>
            <person name="Stevens K."/>
            <person name="Unwin L."/>
            <person name="Whitehead S."/>
            <person name="Barrell B.G."/>
            <person name="Maskell D.J."/>
        </authorList>
    </citation>
    <scope>NUCLEOTIDE SEQUENCE [LARGE SCALE GENOMIC DNA]</scope>
    <source>
        <strain>12822 / ATCC BAA-587 / NCTC 13253</strain>
    </source>
</reference>
<sequence length="70" mass="8535">MPIVRLKENEPFEAALRRFKRTIEKTGLLTELRSREFYEKPTAERKRKHAAAVKRHYKRIRSQQLPPRLY</sequence>
<gene>
    <name evidence="1" type="primary">rpsU</name>
    <name type="ordered locus">BPP2842</name>
</gene>
<proteinExistence type="inferred from homology"/>
<name>RS21_BORPA</name>
<evidence type="ECO:0000255" key="1">
    <source>
        <dbReference type="HAMAP-Rule" id="MF_00358"/>
    </source>
</evidence>
<evidence type="ECO:0000256" key="2">
    <source>
        <dbReference type="SAM" id="MobiDB-lite"/>
    </source>
</evidence>
<evidence type="ECO:0000305" key="3"/>
<feature type="chain" id="PRO_0000178308" description="Small ribosomal subunit protein bS21">
    <location>
        <begin position="1"/>
        <end position="70"/>
    </location>
</feature>
<feature type="region of interest" description="Disordered" evidence="2">
    <location>
        <begin position="40"/>
        <end position="70"/>
    </location>
</feature>
<feature type="compositionally biased region" description="Basic residues" evidence="2">
    <location>
        <begin position="45"/>
        <end position="61"/>
    </location>
</feature>
<dbReference type="EMBL" id="BX640431">
    <property type="protein sequence ID" value="CAE38134.1"/>
    <property type="status" value="ALT_INIT"/>
    <property type="molecule type" value="Genomic_DNA"/>
</dbReference>
<dbReference type="RefSeq" id="WP_006218592.1">
    <property type="nucleotide sequence ID" value="NC_002928.3"/>
</dbReference>
<dbReference type="SMR" id="Q7W6Q9"/>
<dbReference type="GeneID" id="94357011"/>
<dbReference type="KEGG" id="bpa:BPP2842"/>
<dbReference type="HOGENOM" id="CLU_159258_1_0_4"/>
<dbReference type="Proteomes" id="UP000001421">
    <property type="component" value="Chromosome"/>
</dbReference>
<dbReference type="GO" id="GO:1990904">
    <property type="term" value="C:ribonucleoprotein complex"/>
    <property type="evidence" value="ECO:0007669"/>
    <property type="project" value="UniProtKB-KW"/>
</dbReference>
<dbReference type="GO" id="GO:0005840">
    <property type="term" value="C:ribosome"/>
    <property type="evidence" value="ECO:0007669"/>
    <property type="project" value="UniProtKB-KW"/>
</dbReference>
<dbReference type="GO" id="GO:0003735">
    <property type="term" value="F:structural constituent of ribosome"/>
    <property type="evidence" value="ECO:0007669"/>
    <property type="project" value="InterPro"/>
</dbReference>
<dbReference type="GO" id="GO:0006412">
    <property type="term" value="P:translation"/>
    <property type="evidence" value="ECO:0007669"/>
    <property type="project" value="UniProtKB-UniRule"/>
</dbReference>
<dbReference type="Gene3D" id="1.20.5.1150">
    <property type="entry name" value="Ribosomal protein S8"/>
    <property type="match status" value="1"/>
</dbReference>
<dbReference type="HAMAP" id="MF_00358">
    <property type="entry name" value="Ribosomal_bS21"/>
    <property type="match status" value="1"/>
</dbReference>
<dbReference type="InterPro" id="IPR001911">
    <property type="entry name" value="Ribosomal_bS21"/>
</dbReference>
<dbReference type="InterPro" id="IPR018278">
    <property type="entry name" value="Ribosomal_bS21_CS"/>
</dbReference>
<dbReference type="InterPro" id="IPR038380">
    <property type="entry name" value="Ribosomal_bS21_sf"/>
</dbReference>
<dbReference type="NCBIfam" id="TIGR00030">
    <property type="entry name" value="S21p"/>
    <property type="match status" value="1"/>
</dbReference>
<dbReference type="PANTHER" id="PTHR21109">
    <property type="entry name" value="MITOCHONDRIAL 28S RIBOSOMAL PROTEIN S21"/>
    <property type="match status" value="1"/>
</dbReference>
<dbReference type="PANTHER" id="PTHR21109:SF22">
    <property type="entry name" value="SMALL RIBOSOMAL SUBUNIT PROTEIN BS21"/>
    <property type="match status" value="1"/>
</dbReference>
<dbReference type="Pfam" id="PF01165">
    <property type="entry name" value="Ribosomal_S21"/>
    <property type="match status" value="1"/>
</dbReference>
<dbReference type="PRINTS" id="PR00976">
    <property type="entry name" value="RIBOSOMALS21"/>
</dbReference>
<dbReference type="PROSITE" id="PS01181">
    <property type="entry name" value="RIBOSOMAL_S21"/>
    <property type="match status" value="1"/>
</dbReference>
<organism>
    <name type="scientific">Bordetella parapertussis (strain 12822 / ATCC BAA-587 / NCTC 13253)</name>
    <dbReference type="NCBI Taxonomy" id="257311"/>
    <lineage>
        <taxon>Bacteria</taxon>
        <taxon>Pseudomonadati</taxon>
        <taxon>Pseudomonadota</taxon>
        <taxon>Betaproteobacteria</taxon>
        <taxon>Burkholderiales</taxon>
        <taxon>Alcaligenaceae</taxon>
        <taxon>Bordetella</taxon>
    </lineage>
</organism>
<comment type="similarity">
    <text evidence="1">Belongs to the bacterial ribosomal protein bS21 family.</text>
</comment>
<comment type="sequence caution" evidence="3">
    <conflict type="erroneous initiation">
        <sequence resource="EMBL-CDS" id="CAE38134"/>
    </conflict>
</comment>
<accession>Q7W6Q9</accession>
<keyword id="KW-0687">Ribonucleoprotein</keyword>
<keyword id="KW-0689">Ribosomal protein</keyword>
<protein>
    <recommendedName>
        <fullName evidence="1">Small ribosomal subunit protein bS21</fullName>
    </recommendedName>
    <alternativeName>
        <fullName evidence="3">30S ribosomal protein S21</fullName>
    </alternativeName>
</protein>